<protein>
    <recommendedName>
        <fullName evidence="1">Cytoplasmic trehalase</fullName>
        <ecNumber evidence="1">3.2.1.28</ecNumber>
    </recommendedName>
    <alternativeName>
        <fullName evidence="1">Alpha,alpha-trehalase</fullName>
    </alternativeName>
    <alternativeName>
        <fullName evidence="1">Alpha,alpha-trehalose glucohydrolase</fullName>
    </alternativeName>
</protein>
<comment type="function">
    <text evidence="1">Hydrolyzes trehalose to glucose. Could be involved, in cells returning to low osmolarity conditions, in the utilization of the accumulated cytoplasmic trehalose, which was synthesized in response to high osmolarity.</text>
</comment>
<comment type="catalytic activity">
    <reaction evidence="1">
        <text>alpha,alpha-trehalose + H2O = alpha-D-glucose + beta-D-glucose</text>
        <dbReference type="Rhea" id="RHEA:32675"/>
        <dbReference type="ChEBI" id="CHEBI:15377"/>
        <dbReference type="ChEBI" id="CHEBI:15903"/>
        <dbReference type="ChEBI" id="CHEBI:16551"/>
        <dbReference type="ChEBI" id="CHEBI:17925"/>
        <dbReference type="EC" id="3.2.1.28"/>
    </reaction>
</comment>
<comment type="pathway">
    <text evidence="1">Glycan degradation; trehalose degradation; D-glucose from alpha,alpha-trehalose: step 1/1.</text>
</comment>
<comment type="subunit">
    <text evidence="1">Monomer.</text>
</comment>
<comment type="subcellular location">
    <subcellularLocation>
        <location evidence="1">Cytoplasm</location>
    </subcellularLocation>
</comment>
<comment type="similarity">
    <text evidence="1">Belongs to the glycosyl hydrolase 37 family.</text>
</comment>
<keyword id="KW-0963">Cytoplasm</keyword>
<keyword id="KW-0326">Glycosidase</keyword>
<keyword id="KW-0378">Hydrolase</keyword>
<keyword id="KW-1185">Reference proteome</keyword>
<accession>Q8FCI4</accession>
<sequence length="549" mass="63724">MLNQKIQNPNPDELMIEVDLCYELDPYELKLDEMIEAEPEPEMIEGLPASDALTPADRYLELFEHVQSAKIFPDSKTFPDCAPKMDPLDILIRYRKVRRHRDFDLRKFVENHFWLPEVYSSEYVSDPQNSLKEHIDQLWPVLTREPQDHIPWSSLLALPQSYIVPGGRFSETYYWDSYFTMLGLAESGREDLLKCMADNFAWMIENYGHIPNGNRTYYLSRSQPPVFALMVELFEEDGVRGARRYLDHLKMEYAFWMDGAESLIPNQAYRHVVRMPDGSLLNRYWDDRDTPRDESWLEDVETAKHSGRPPNEVYRDLRAGAASGWDYSSRWLRDTGRLASIRTTQFIPIDLNAFLFKLESAIANISALKGEKETEALFRQKASARRDAVNRYLWDDENGIYRDYDWRREQLALFSAAAIVPLYVGMANHEQADRLANAVRSRLLTPGGILASEYETGEQWDKPNGWAPLQWMAIQGFKMYGDDLLGDEIARNWLKTVNQFYLEQHKLIEKYHIADGVPREGGGGEYPLQDGFGWTNGVVRRLIGLYGEP</sequence>
<reference key="1">
    <citation type="journal article" date="2002" name="Proc. Natl. Acad. Sci. U.S.A.">
        <title>Extensive mosaic structure revealed by the complete genome sequence of uropathogenic Escherichia coli.</title>
        <authorList>
            <person name="Welch R.A."/>
            <person name="Burland V."/>
            <person name="Plunkett G. III"/>
            <person name="Redford P."/>
            <person name="Roesch P."/>
            <person name="Rasko D."/>
            <person name="Buckles E.L."/>
            <person name="Liou S.-R."/>
            <person name="Boutin A."/>
            <person name="Hackett J."/>
            <person name="Stroud D."/>
            <person name="Mayhew G.F."/>
            <person name="Rose D.J."/>
            <person name="Zhou S."/>
            <person name="Schwartz D.C."/>
            <person name="Perna N.T."/>
            <person name="Mobley H.L.T."/>
            <person name="Donnenberg M.S."/>
            <person name="Blattner F.R."/>
        </authorList>
    </citation>
    <scope>NUCLEOTIDE SEQUENCE [LARGE SCALE GENOMIC DNA]</scope>
    <source>
        <strain>CFT073 / ATCC 700928 / UPEC</strain>
    </source>
</reference>
<evidence type="ECO:0000255" key="1">
    <source>
        <dbReference type="HAMAP-Rule" id="MF_01059"/>
    </source>
</evidence>
<organism>
    <name type="scientific">Escherichia coli O6:H1 (strain CFT073 / ATCC 700928 / UPEC)</name>
    <dbReference type="NCBI Taxonomy" id="199310"/>
    <lineage>
        <taxon>Bacteria</taxon>
        <taxon>Pseudomonadati</taxon>
        <taxon>Pseudomonadota</taxon>
        <taxon>Gammaproteobacteria</taxon>
        <taxon>Enterobacterales</taxon>
        <taxon>Enterobacteriaceae</taxon>
        <taxon>Escherichia</taxon>
    </lineage>
</organism>
<feature type="chain" id="PRO_0000173788" description="Cytoplasmic trehalase">
    <location>
        <begin position="1"/>
        <end position="549"/>
    </location>
</feature>
<feature type="active site" description="Proton donor/acceptor" evidence="1">
    <location>
        <position position="326"/>
    </location>
</feature>
<feature type="active site" description="Proton donor/acceptor" evidence="1">
    <location>
        <position position="509"/>
    </location>
</feature>
<feature type="binding site" evidence="1">
    <location>
        <position position="168"/>
    </location>
    <ligand>
        <name>substrate</name>
    </ligand>
</feature>
<feature type="binding site" evidence="1">
    <location>
        <begin position="175"/>
        <end position="176"/>
    </location>
    <ligand>
        <name>substrate</name>
    </ligand>
</feature>
<feature type="binding site" evidence="1">
    <location>
        <position position="212"/>
    </location>
    <ligand>
        <name>substrate</name>
    </ligand>
</feature>
<feature type="binding site" evidence="1">
    <location>
        <begin position="221"/>
        <end position="223"/>
    </location>
    <ligand>
        <name>substrate</name>
    </ligand>
</feature>
<feature type="binding site" evidence="1">
    <location>
        <begin position="292"/>
        <end position="294"/>
    </location>
    <ligand>
        <name>substrate</name>
    </ligand>
</feature>
<feature type="binding site" evidence="1">
    <location>
        <position position="324"/>
    </location>
    <ligand>
        <name>substrate</name>
    </ligand>
</feature>
<feature type="binding site" evidence="1">
    <location>
        <position position="525"/>
    </location>
    <ligand>
        <name>substrate</name>
    </ligand>
</feature>
<dbReference type="EC" id="3.2.1.28" evidence="1"/>
<dbReference type="EMBL" id="AE014075">
    <property type="protein sequence ID" value="AAN82766.1"/>
    <property type="molecule type" value="Genomic_DNA"/>
</dbReference>
<dbReference type="RefSeq" id="WP_000934214.1">
    <property type="nucleotide sequence ID" value="NZ_CP051263.1"/>
</dbReference>
<dbReference type="SMR" id="Q8FCI4"/>
<dbReference type="STRING" id="199310.c4330"/>
<dbReference type="CAZy" id="GH37">
    <property type="family name" value="Glycoside Hydrolase Family 37"/>
</dbReference>
<dbReference type="KEGG" id="ecc:c4330"/>
<dbReference type="eggNOG" id="COG1626">
    <property type="taxonomic scope" value="Bacteria"/>
</dbReference>
<dbReference type="HOGENOM" id="CLU_006451_3_1_6"/>
<dbReference type="BioCyc" id="ECOL199310:C4330-MONOMER"/>
<dbReference type="UniPathway" id="UPA00300">
    <property type="reaction ID" value="UER00535"/>
</dbReference>
<dbReference type="Proteomes" id="UP000001410">
    <property type="component" value="Chromosome"/>
</dbReference>
<dbReference type="GO" id="GO:0005737">
    <property type="term" value="C:cytoplasm"/>
    <property type="evidence" value="ECO:0007669"/>
    <property type="project" value="UniProtKB-SubCell"/>
</dbReference>
<dbReference type="GO" id="GO:0004555">
    <property type="term" value="F:alpha,alpha-trehalase activity"/>
    <property type="evidence" value="ECO:0007669"/>
    <property type="project" value="UniProtKB-UniRule"/>
</dbReference>
<dbReference type="GO" id="GO:0071474">
    <property type="term" value="P:cellular hyperosmotic response"/>
    <property type="evidence" value="ECO:0007669"/>
    <property type="project" value="InterPro"/>
</dbReference>
<dbReference type="GO" id="GO:0005993">
    <property type="term" value="P:trehalose catabolic process"/>
    <property type="evidence" value="ECO:0007669"/>
    <property type="project" value="UniProtKB-UniRule"/>
</dbReference>
<dbReference type="FunFam" id="1.50.10.10:FF:000003">
    <property type="entry name" value="Cytoplasmic trehalase"/>
    <property type="match status" value="1"/>
</dbReference>
<dbReference type="Gene3D" id="1.50.10.10">
    <property type="match status" value="1"/>
</dbReference>
<dbReference type="HAMAP" id="MF_01059">
    <property type="entry name" value="Cyt_trehalase"/>
    <property type="match status" value="1"/>
</dbReference>
<dbReference type="InterPro" id="IPR008928">
    <property type="entry name" value="6-hairpin_glycosidase_sf"/>
</dbReference>
<dbReference type="InterPro" id="IPR012341">
    <property type="entry name" value="6hp_glycosidase-like_sf"/>
</dbReference>
<dbReference type="InterPro" id="IPR023715">
    <property type="entry name" value="Cyt_trehalase"/>
</dbReference>
<dbReference type="InterPro" id="IPR001661">
    <property type="entry name" value="Glyco_hydro_37"/>
</dbReference>
<dbReference type="InterPro" id="IPR018232">
    <property type="entry name" value="Glyco_hydro_37_CS"/>
</dbReference>
<dbReference type="NCBIfam" id="NF009773">
    <property type="entry name" value="PRK13270.1"/>
    <property type="match status" value="1"/>
</dbReference>
<dbReference type="NCBIfam" id="NF009774">
    <property type="entry name" value="PRK13271.1"/>
    <property type="match status" value="1"/>
</dbReference>
<dbReference type="PANTHER" id="PTHR23403:SF8">
    <property type="entry name" value="CYTOPLASMIC TREHALASE"/>
    <property type="match status" value="1"/>
</dbReference>
<dbReference type="PANTHER" id="PTHR23403">
    <property type="entry name" value="TREHALASE"/>
    <property type="match status" value="1"/>
</dbReference>
<dbReference type="Pfam" id="PF01204">
    <property type="entry name" value="Trehalase"/>
    <property type="match status" value="1"/>
</dbReference>
<dbReference type="PRINTS" id="PR00744">
    <property type="entry name" value="GLHYDRLASE37"/>
</dbReference>
<dbReference type="SUPFAM" id="SSF48208">
    <property type="entry name" value="Six-hairpin glycosidases"/>
    <property type="match status" value="1"/>
</dbReference>
<dbReference type="PROSITE" id="PS00927">
    <property type="entry name" value="TREHALASE_1"/>
    <property type="match status" value="1"/>
</dbReference>
<dbReference type="PROSITE" id="PS00928">
    <property type="entry name" value="TREHALASE_2"/>
    <property type="match status" value="1"/>
</dbReference>
<gene>
    <name evidence="1" type="primary">treF</name>
    <name type="ordered locus">c4330</name>
</gene>
<name>TREF_ECOL6</name>
<proteinExistence type="inferred from homology"/>